<name>TLC4B_XENLA</name>
<gene>
    <name type="primary">tlcd4-b</name>
    <name type="synonym">tmem56-b</name>
</gene>
<comment type="subcellular location">
    <subcellularLocation>
        <location evidence="3">Membrane</location>
        <topology evidence="3">Multi-pass membrane protein</topology>
    </subcellularLocation>
</comment>
<comment type="similarity">
    <text evidence="3">Belongs to the TLCD4 family.</text>
</comment>
<keyword id="KW-0472">Membrane</keyword>
<keyword id="KW-1185">Reference proteome</keyword>
<keyword id="KW-0812">Transmembrane</keyword>
<keyword id="KW-1133">Transmembrane helix</keyword>
<sequence length="262" mass="29853">MANFSPLTVFISVTSLAVFQFLFHVGSSWLSTRLTGGFHKLSARQKIEWNSRTVSSFHALVVGCFCLYILVYDDAVNADPVWGDPFMVKLNVAVTSGYLISDLLLIIYYWKEIGDKYFVTHHLAALYACYYVLGEGMLPYFGNFRLIAEFSTPFVNQRWFFEVLGYSKYSLPNMVNGVLMTISFFIVRIAVIPIYYGRVFSTFGTEAFHRLGLGAQCAWIISSVSLDIMNVMWMIKIAKGCYKVLYHRDGKLTKTQNNGKLE</sequence>
<proteinExistence type="evidence at transcript level"/>
<feature type="chain" id="PRO_0000286705" description="TLC domain-containing protein 4-B">
    <location>
        <begin position="1"/>
        <end position="262"/>
    </location>
</feature>
<feature type="transmembrane region" description="Helical" evidence="1">
    <location>
        <begin position="6"/>
        <end position="26"/>
    </location>
</feature>
<feature type="transmembrane region" description="Helical" evidence="1">
    <location>
        <begin position="53"/>
        <end position="73"/>
    </location>
</feature>
<feature type="transmembrane region" description="Helical" evidence="1">
    <location>
        <begin position="90"/>
        <end position="110"/>
    </location>
</feature>
<feature type="transmembrane region" description="Helical" evidence="1">
    <location>
        <begin position="122"/>
        <end position="142"/>
    </location>
</feature>
<feature type="transmembrane region" description="Helical" evidence="1">
    <location>
        <begin position="177"/>
        <end position="197"/>
    </location>
</feature>
<feature type="transmembrane region" description="Helical" evidence="1">
    <location>
        <begin position="218"/>
        <end position="238"/>
    </location>
</feature>
<feature type="domain" description="TLC" evidence="2">
    <location>
        <begin position="44"/>
        <end position="246"/>
    </location>
</feature>
<protein>
    <recommendedName>
        <fullName evidence="3">TLC domain-containing protein 4-B</fullName>
    </recommendedName>
    <alternativeName>
        <fullName>Transmembrane protein 56-B</fullName>
    </alternativeName>
</protein>
<accession>Q6PGS5</accession>
<dbReference type="EMBL" id="BC056848">
    <property type="protein sequence ID" value="AAH56848.1"/>
    <property type="molecule type" value="mRNA"/>
</dbReference>
<dbReference type="RefSeq" id="NP_001079916.1">
    <property type="nucleotide sequence ID" value="NM_001086447.1"/>
</dbReference>
<dbReference type="SMR" id="Q6PGS5"/>
<dbReference type="DNASU" id="379606"/>
<dbReference type="GeneID" id="379606"/>
<dbReference type="KEGG" id="xla:379606"/>
<dbReference type="AGR" id="Xenbase:XB-GENE-5813226"/>
<dbReference type="CTD" id="379606"/>
<dbReference type="Xenbase" id="XB-GENE-5813226">
    <property type="gene designation" value="tlcd4.S"/>
</dbReference>
<dbReference type="OrthoDB" id="10266980at2759"/>
<dbReference type="Proteomes" id="UP000186698">
    <property type="component" value="Chromosome 4S"/>
</dbReference>
<dbReference type="Bgee" id="379606">
    <property type="expression patterns" value="Expressed in egg cell and 17 other cell types or tissues"/>
</dbReference>
<dbReference type="GO" id="GO:0005783">
    <property type="term" value="C:endoplasmic reticulum"/>
    <property type="evidence" value="ECO:0000318"/>
    <property type="project" value="GO_Central"/>
</dbReference>
<dbReference type="GO" id="GO:0016020">
    <property type="term" value="C:membrane"/>
    <property type="evidence" value="ECO:0007669"/>
    <property type="project" value="UniProtKB-SubCell"/>
</dbReference>
<dbReference type="GO" id="GO:0055088">
    <property type="term" value="P:lipid homeostasis"/>
    <property type="evidence" value="ECO:0000318"/>
    <property type="project" value="GO_Central"/>
</dbReference>
<dbReference type="InterPro" id="IPR006634">
    <property type="entry name" value="TLC-dom"/>
</dbReference>
<dbReference type="InterPro" id="IPR050846">
    <property type="entry name" value="TLCD"/>
</dbReference>
<dbReference type="PANTHER" id="PTHR13439">
    <property type="entry name" value="CT120 PROTEIN"/>
    <property type="match status" value="1"/>
</dbReference>
<dbReference type="PANTHER" id="PTHR13439:SF1">
    <property type="entry name" value="TLC DOMAIN-CONTAINING PROTEIN 4"/>
    <property type="match status" value="1"/>
</dbReference>
<dbReference type="Pfam" id="PF03798">
    <property type="entry name" value="TRAM_LAG1_CLN8"/>
    <property type="match status" value="1"/>
</dbReference>
<dbReference type="SMART" id="SM00724">
    <property type="entry name" value="TLC"/>
    <property type="match status" value="1"/>
</dbReference>
<dbReference type="PROSITE" id="PS50922">
    <property type="entry name" value="TLC"/>
    <property type="match status" value="1"/>
</dbReference>
<reference key="1">
    <citation type="submission" date="2003-08" db="EMBL/GenBank/DDBJ databases">
        <authorList>
            <consortium name="NIH - Xenopus Gene Collection (XGC) project"/>
        </authorList>
    </citation>
    <scope>NUCLEOTIDE SEQUENCE [LARGE SCALE MRNA]</scope>
    <source>
        <tissue>Tadpole</tissue>
    </source>
</reference>
<organism>
    <name type="scientific">Xenopus laevis</name>
    <name type="common">African clawed frog</name>
    <dbReference type="NCBI Taxonomy" id="8355"/>
    <lineage>
        <taxon>Eukaryota</taxon>
        <taxon>Metazoa</taxon>
        <taxon>Chordata</taxon>
        <taxon>Craniata</taxon>
        <taxon>Vertebrata</taxon>
        <taxon>Euteleostomi</taxon>
        <taxon>Amphibia</taxon>
        <taxon>Batrachia</taxon>
        <taxon>Anura</taxon>
        <taxon>Pipoidea</taxon>
        <taxon>Pipidae</taxon>
        <taxon>Xenopodinae</taxon>
        <taxon>Xenopus</taxon>
        <taxon>Xenopus</taxon>
    </lineage>
</organism>
<evidence type="ECO:0000255" key="1"/>
<evidence type="ECO:0000255" key="2">
    <source>
        <dbReference type="PROSITE-ProRule" id="PRU00205"/>
    </source>
</evidence>
<evidence type="ECO:0000305" key="3"/>